<dbReference type="EC" id="6.1.1.9" evidence="1"/>
<dbReference type="EMBL" id="BX640431">
    <property type="protein sequence ID" value="CAE38151.1"/>
    <property type="molecule type" value="Genomic_DNA"/>
</dbReference>
<dbReference type="RefSeq" id="WP_010928771.1">
    <property type="nucleotide sequence ID" value="NC_002928.3"/>
</dbReference>
<dbReference type="SMR" id="Q7W6P3"/>
<dbReference type="GeneID" id="93204646"/>
<dbReference type="KEGG" id="bpa:BPP2859"/>
<dbReference type="HOGENOM" id="CLU_001493_0_2_4"/>
<dbReference type="Proteomes" id="UP000001421">
    <property type="component" value="Chromosome"/>
</dbReference>
<dbReference type="GO" id="GO:0005829">
    <property type="term" value="C:cytosol"/>
    <property type="evidence" value="ECO:0007669"/>
    <property type="project" value="TreeGrafter"/>
</dbReference>
<dbReference type="GO" id="GO:0002161">
    <property type="term" value="F:aminoacyl-tRNA deacylase activity"/>
    <property type="evidence" value="ECO:0007669"/>
    <property type="project" value="InterPro"/>
</dbReference>
<dbReference type="GO" id="GO:0005524">
    <property type="term" value="F:ATP binding"/>
    <property type="evidence" value="ECO:0007669"/>
    <property type="project" value="UniProtKB-UniRule"/>
</dbReference>
<dbReference type="GO" id="GO:0004832">
    <property type="term" value="F:valine-tRNA ligase activity"/>
    <property type="evidence" value="ECO:0007669"/>
    <property type="project" value="UniProtKB-UniRule"/>
</dbReference>
<dbReference type="GO" id="GO:0006438">
    <property type="term" value="P:valyl-tRNA aminoacylation"/>
    <property type="evidence" value="ECO:0007669"/>
    <property type="project" value="UniProtKB-UniRule"/>
</dbReference>
<dbReference type="CDD" id="cd07962">
    <property type="entry name" value="Anticodon_Ia_Val"/>
    <property type="match status" value="1"/>
</dbReference>
<dbReference type="CDD" id="cd00817">
    <property type="entry name" value="ValRS_core"/>
    <property type="match status" value="1"/>
</dbReference>
<dbReference type="FunFam" id="1.10.287.380:FF:000001">
    <property type="entry name" value="Valine--tRNA ligase"/>
    <property type="match status" value="1"/>
</dbReference>
<dbReference type="FunFam" id="1.10.730.10:FF:000009">
    <property type="entry name" value="Valine--tRNA ligase, mitochondrial"/>
    <property type="match status" value="1"/>
</dbReference>
<dbReference type="FunFam" id="3.40.50.620:FF:000020">
    <property type="entry name" value="Valine--tRNA ligase, mitochondrial"/>
    <property type="match status" value="1"/>
</dbReference>
<dbReference type="FunFam" id="3.40.50.620:FF:000078">
    <property type="entry name" value="Valine--tRNA ligase, mitochondrial"/>
    <property type="match status" value="1"/>
</dbReference>
<dbReference type="Gene3D" id="3.40.50.620">
    <property type="entry name" value="HUPs"/>
    <property type="match status" value="2"/>
</dbReference>
<dbReference type="Gene3D" id="1.10.730.10">
    <property type="entry name" value="Isoleucyl-tRNA Synthetase, Domain 1"/>
    <property type="match status" value="1"/>
</dbReference>
<dbReference type="Gene3D" id="1.10.287.380">
    <property type="entry name" value="Valyl-tRNA synthetase, C-terminal domain"/>
    <property type="match status" value="1"/>
</dbReference>
<dbReference type="HAMAP" id="MF_02004">
    <property type="entry name" value="Val_tRNA_synth_type1"/>
    <property type="match status" value="1"/>
</dbReference>
<dbReference type="InterPro" id="IPR001412">
    <property type="entry name" value="aa-tRNA-synth_I_CS"/>
</dbReference>
<dbReference type="InterPro" id="IPR002300">
    <property type="entry name" value="aa-tRNA-synth_Ia"/>
</dbReference>
<dbReference type="InterPro" id="IPR033705">
    <property type="entry name" value="Anticodon_Ia_Val"/>
</dbReference>
<dbReference type="InterPro" id="IPR013155">
    <property type="entry name" value="M/V/L/I-tRNA-synth_anticd-bd"/>
</dbReference>
<dbReference type="InterPro" id="IPR014729">
    <property type="entry name" value="Rossmann-like_a/b/a_fold"/>
</dbReference>
<dbReference type="InterPro" id="IPR010978">
    <property type="entry name" value="tRNA-bd_arm"/>
</dbReference>
<dbReference type="InterPro" id="IPR009080">
    <property type="entry name" value="tRNAsynth_Ia_anticodon-bd"/>
</dbReference>
<dbReference type="InterPro" id="IPR037118">
    <property type="entry name" value="Val-tRNA_synth_C_sf"/>
</dbReference>
<dbReference type="InterPro" id="IPR019499">
    <property type="entry name" value="Val-tRNA_synth_tRNA-bd"/>
</dbReference>
<dbReference type="InterPro" id="IPR009008">
    <property type="entry name" value="Val/Leu/Ile-tRNA-synth_edit"/>
</dbReference>
<dbReference type="InterPro" id="IPR002303">
    <property type="entry name" value="Valyl-tRNA_ligase"/>
</dbReference>
<dbReference type="NCBIfam" id="NF004349">
    <property type="entry name" value="PRK05729.1"/>
    <property type="match status" value="1"/>
</dbReference>
<dbReference type="NCBIfam" id="TIGR00422">
    <property type="entry name" value="valS"/>
    <property type="match status" value="1"/>
</dbReference>
<dbReference type="PANTHER" id="PTHR11946:SF93">
    <property type="entry name" value="VALINE--TRNA LIGASE, CHLOROPLASTIC_MITOCHONDRIAL 2"/>
    <property type="match status" value="1"/>
</dbReference>
<dbReference type="PANTHER" id="PTHR11946">
    <property type="entry name" value="VALYL-TRNA SYNTHETASES"/>
    <property type="match status" value="1"/>
</dbReference>
<dbReference type="Pfam" id="PF08264">
    <property type="entry name" value="Anticodon_1"/>
    <property type="match status" value="1"/>
</dbReference>
<dbReference type="Pfam" id="PF00133">
    <property type="entry name" value="tRNA-synt_1"/>
    <property type="match status" value="1"/>
</dbReference>
<dbReference type="Pfam" id="PF10458">
    <property type="entry name" value="Val_tRNA-synt_C"/>
    <property type="match status" value="1"/>
</dbReference>
<dbReference type="PRINTS" id="PR00986">
    <property type="entry name" value="TRNASYNTHVAL"/>
</dbReference>
<dbReference type="SUPFAM" id="SSF47323">
    <property type="entry name" value="Anticodon-binding domain of a subclass of class I aminoacyl-tRNA synthetases"/>
    <property type="match status" value="1"/>
</dbReference>
<dbReference type="SUPFAM" id="SSF52374">
    <property type="entry name" value="Nucleotidylyl transferase"/>
    <property type="match status" value="1"/>
</dbReference>
<dbReference type="SUPFAM" id="SSF46589">
    <property type="entry name" value="tRNA-binding arm"/>
    <property type="match status" value="1"/>
</dbReference>
<dbReference type="SUPFAM" id="SSF50677">
    <property type="entry name" value="ValRS/IleRS/LeuRS editing domain"/>
    <property type="match status" value="1"/>
</dbReference>
<dbReference type="PROSITE" id="PS00178">
    <property type="entry name" value="AA_TRNA_LIGASE_I"/>
    <property type="match status" value="1"/>
</dbReference>
<keyword id="KW-0030">Aminoacyl-tRNA synthetase</keyword>
<keyword id="KW-0067">ATP-binding</keyword>
<keyword id="KW-0175">Coiled coil</keyword>
<keyword id="KW-0963">Cytoplasm</keyword>
<keyword id="KW-0436">Ligase</keyword>
<keyword id="KW-0547">Nucleotide-binding</keyword>
<keyword id="KW-0648">Protein biosynthesis</keyword>
<name>SYV_BORPA</name>
<evidence type="ECO:0000255" key="1">
    <source>
        <dbReference type="HAMAP-Rule" id="MF_02004"/>
    </source>
</evidence>
<protein>
    <recommendedName>
        <fullName evidence="1">Valine--tRNA ligase</fullName>
        <ecNumber evidence="1">6.1.1.9</ecNumber>
    </recommendedName>
    <alternativeName>
        <fullName evidence="1">Valyl-tRNA synthetase</fullName>
        <shortName evidence="1">ValRS</shortName>
    </alternativeName>
</protein>
<comment type="function">
    <text evidence="1">Catalyzes the attachment of valine to tRNA(Val). As ValRS can inadvertently accommodate and process structurally similar amino acids such as threonine, to avoid such errors, it has a 'posttransfer' editing activity that hydrolyzes mischarged Thr-tRNA(Val) in a tRNA-dependent manner.</text>
</comment>
<comment type="catalytic activity">
    <reaction evidence="1">
        <text>tRNA(Val) + L-valine + ATP = L-valyl-tRNA(Val) + AMP + diphosphate</text>
        <dbReference type="Rhea" id="RHEA:10704"/>
        <dbReference type="Rhea" id="RHEA-COMP:9672"/>
        <dbReference type="Rhea" id="RHEA-COMP:9708"/>
        <dbReference type="ChEBI" id="CHEBI:30616"/>
        <dbReference type="ChEBI" id="CHEBI:33019"/>
        <dbReference type="ChEBI" id="CHEBI:57762"/>
        <dbReference type="ChEBI" id="CHEBI:78442"/>
        <dbReference type="ChEBI" id="CHEBI:78537"/>
        <dbReference type="ChEBI" id="CHEBI:456215"/>
        <dbReference type="EC" id="6.1.1.9"/>
    </reaction>
</comment>
<comment type="subunit">
    <text evidence="1">Monomer.</text>
</comment>
<comment type="subcellular location">
    <subcellularLocation>
        <location evidence="1">Cytoplasm</location>
    </subcellularLocation>
</comment>
<comment type="domain">
    <text evidence="1">ValRS has two distinct active sites: one for aminoacylation and one for editing. The misactivated threonine is translocated from the active site to the editing site.</text>
</comment>
<comment type="domain">
    <text evidence="1">The C-terminal coiled-coil domain is crucial for aminoacylation activity.</text>
</comment>
<comment type="similarity">
    <text evidence="1">Belongs to the class-I aminoacyl-tRNA synthetase family. ValS type 1 subfamily.</text>
</comment>
<feature type="chain" id="PRO_0000224446" description="Valine--tRNA ligase">
    <location>
        <begin position="1"/>
        <end position="960"/>
    </location>
</feature>
<feature type="coiled-coil region" evidence="1">
    <location>
        <begin position="893"/>
        <end position="955"/>
    </location>
</feature>
<feature type="short sequence motif" description="'HIGH' region">
    <location>
        <begin position="61"/>
        <end position="71"/>
    </location>
</feature>
<feature type="short sequence motif" description="'KMSKS' region">
    <location>
        <begin position="569"/>
        <end position="573"/>
    </location>
</feature>
<feature type="binding site" evidence="1">
    <location>
        <position position="572"/>
    </location>
    <ligand>
        <name>ATP</name>
        <dbReference type="ChEBI" id="CHEBI:30616"/>
    </ligand>
</feature>
<gene>
    <name evidence="1" type="primary">valS</name>
    <name type="ordered locus">BPP2859</name>
</gene>
<accession>Q7W6P3</accession>
<organism>
    <name type="scientific">Bordetella parapertussis (strain 12822 / ATCC BAA-587 / NCTC 13253)</name>
    <dbReference type="NCBI Taxonomy" id="257311"/>
    <lineage>
        <taxon>Bacteria</taxon>
        <taxon>Pseudomonadati</taxon>
        <taxon>Pseudomonadota</taxon>
        <taxon>Betaproteobacteria</taxon>
        <taxon>Burkholderiales</taxon>
        <taxon>Alcaligenaceae</taxon>
        <taxon>Bordetella</taxon>
    </lineage>
</organism>
<reference key="1">
    <citation type="journal article" date="2003" name="Nat. Genet.">
        <title>Comparative analysis of the genome sequences of Bordetella pertussis, Bordetella parapertussis and Bordetella bronchiseptica.</title>
        <authorList>
            <person name="Parkhill J."/>
            <person name="Sebaihia M."/>
            <person name="Preston A."/>
            <person name="Murphy L.D."/>
            <person name="Thomson N.R."/>
            <person name="Harris D.E."/>
            <person name="Holden M.T.G."/>
            <person name="Churcher C.M."/>
            <person name="Bentley S.D."/>
            <person name="Mungall K.L."/>
            <person name="Cerdeno-Tarraga A.-M."/>
            <person name="Temple L."/>
            <person name="James K.D."/>
            <person name="Harris B."/>
            <person name="Quail M.A."/>
            <person name="Achtman M."/>
            <person name="Atkin R."/>
            <person name="Baker S."/>
            <person name="Basham D."/>
            <person name="Bason N."/>
            <person name="Cherevach I."/>
            <person name="Chillingworth T."/>
            <person name="Collins M."/>
            <person name="Cronin A."/>
            <person name="Davis P."/>
            <person name="Doggett J."/>
            <person name="Feltwell T."/>
            <person name="Goble A."/>
            <person name="Hamlin N."/>
            <person name="Hauser H."/>
            <person name="Holroyd S."/>
            <person name="Jagels K."/>
            <person name="Leather S."/>
            <person name="Moule S."/>
            <person name="Norberczak H."/>
            <person name="O'Neil S."/>
            <person name="Ormond D."/>
            <person name="Price C."/>
            <person name="Rabbinowitsch E."/>
            <person name="Rutter S."/>
            <person name="Sanders M."/>
            <person name="Saunders D."/>
            <person name="Seeger K."/>
            <person name="Sharp S."/>
            <person name="Simmonds M."/>
            <person name="Skelton J."/>
            <person name="Squares R."/>
            <person name="Squares S."/>
            <person name="Stevens K."/>
            <person name="Unwin L."/>
            <person name="Whitehead S."/>
            <person name="Barrell B.G."/>
            <person name="Maskell D.J."/>
        </authorList>
    </citation>
    <scope>NUCLEOTIDE SEQUENCE [LARGE SCALE GENOMIC DNA]</scope>
    <source>
        <strain>12822 / ATCC BAA-587 / NCTC 13253</strain>
    </source>
</reference>
<sequence>MTDAAPNQPVNESQKLSKSFEPAEIETRWYDEWAKRGYFDAGRHVETGTDPQPYVIQFPPPNVTGTLHMGHAFNQTIMDGLVRYHRMLGDDTVFVPGTDHAGIATQIVVERQLDAQKVSRHDLGREKFVEKVWEWKEQSGSTITGQVRRLGASADWPREYFTMDARMSRGVAETFVRLYQQGLIYRGKRLVNWDPKLLTAVSDLEVQSEEVDGHMWHILYPFVDGPQTITDQDGNTVTLRGMTIATTRPETMLADGALCVHPDDPRYKHLLGKLVELPLCDRNIPIIADDFVDPDFGTGCVKITGAHDFNDYACALRHDIPLIVIFTLDAHINENGPKQFQGLERYEARQAVVAELQAQQYLVKVEPHKMMQPKGDRTGVVLEPMLTDQWFVAMSKPAPASTLNPGKSITEVALEAVADGRIAFYPENWATIYNQWLNNIQDWCISRQLWWGHQIPAWYSEDGQVFVARSEQEAQEQARAAGVAGPLTRDPDVLDTWFSSALVPFTTFGWPEDTPDLRRYLPSSVLVTGFDIIFFWVARMVMLTMHMTGSVPFKHVYVHGLIRDADGQKMSKSKGNTLDPVDLIDGIDLEGLVRKRTFGLMNPKQAGAIEKATRRQYPDGIPAFGTDALRFTMAAYATLGRNINFDLKRCEGYRNFCNKLWNATRFVLMNTEGHALDGDGGELSFADRWIVSQLQALEAEVERGFADYRFDNVANALYRYVWDEYCDWYLELAKVQIQQGTPAQQLGTRRTLIRVLEAVLRLAHPVIPFITEELWQKVALVAGKRTAGAVASVSVQPYPRANPQAVDAEAEAAVAELKSQVEAVRALRGEMNLSPAQRVPLVAEGPTDVLSRNAPYLAALAKLSEVEVVAALPDAGAPVQVVGDARLMLHVEIDVAAECARLDKEIARLEGEIAKANGKLGNASFVERAPAAVVEQEKARLAQFSETLKKVRGQRVKLGA</sequence>
<proteinExistence type="inferred from homology"/>